<name>DHC5A_DANRE</name>
<evidence type="ECO:0000250" key="1">
    <source>
        <dbReference type="UniProtKB" id="Q8IUH5"/>
    </source>
</evidence>
<evidence type="ECO:0000250" key="2">
    <source>
        <dbReference type="UniProtKB" id="Q8VDZ4"/>
    </source>
</evidence>
<evidence type="ECO:0000255" key="3"/>
<evidence type="ECO:0000255" key="4">
    <source>
        <dbReference type="PROSITE-ProRule" id="PRU00067"/>
    </source>
</evidence>
<evidence type="ECO:0000256" key="5">
    <source>
        <dbReference type="SAM" id="MobiDB-lite"/>
    </source>
</evidence>
<evidence type="ECO:0000269" key="6">
    <source>
    </source>
</evidence>
<evidence type="ECO:0000305" key="7"/>
<evidence type="ECO:0000312" key="8">
    <source>
        <dbReference type="ZFIN" id="ZDB-GENE-090312-92"/>
    </source>
</evidence>
<gene>
    <name evidence="8" type="primary">zdhhc5a</name>
</gene>
<keyword id="KW-0012">Acyltransferase</keyword>
<keyword id="KW-1003">Cell membrane</keyword>
<keyword id="KW-0449">Lipoprotein</keyword>
<keyword id="KW-0472">Membrane</keyword>
<keyword id="KW-0488">Methylation</keyword>
<keyword id="KW-0564">Palmitate</keyword>
<keyword id="KW-0597">Phosphoprotein</keyword>
<keyword id="KW-1185">Reference proteome</keyword>
<keyword id="KW-0808">Transferase</keyword>
<keyword id="KW-0812">Transmembrane</keyword>
<keyword id="KW-1133">Transmembrane helix</keyword>
<organism>
    <name type="scientific">Danio rerio</name>
    <name type="common">Zebrafish</name>
    <name type="synonym">Brachydanio rerio</name>
    <dbReference type="NCBI Taxonomy" id="7955"/>
    <lineage>
        <taxon>Eukaryota</taxon>
        <taxon>Metazoa</taxon>
        <taxon>Chordata</taxon>
        <taxon>Craniata</taxon>
        <taxon>Vertebrata</taxon>
        <taxon>Euteleostomi</taxon>
        <taxon>Actinopterygii</taxon>
        <taxon>Neopterygii</taxon>
        <taxon>Teleostei</taxon>
        <taxon>Ostariophysi</taxon>
        <taxon>Cypriniformes</taxon>
        <taxon>Danionidae</taxon>
        <taxon>Danioninae</taxon>
        <taxon>Danio</taxon>
    </lineage>
</organism>
<sequence length="744" mass="80501">MPSGSMSGGVSGPTSPPHPTVPSRPLRPSRYVPVSAATAFLVGSTTLFFCFTCPWLSEQFSVAVPIYNGVMFMFVLANFCMATFMDPGIFPRAEEDEDKEDDFRAPLYKTVEIRGIQVRMKWCSTCRFYRPPRCSHCSVCDNCVEDFDHHCPWVNNCIGRRNYRYFFLFLLSLTAHIMGVFGFGLLFILYHTQQLDRVHSAVTMAVMCVAGLFFIPVAGLTGFHVVLVARGRTTNEQVTGKFRGGVNPFTNGCLRNVSHVLCSSQAPRYLGRKRKAQTVSVQPPFLRPQLTEAQLAAKVLDNGIQGDLHRSKSSLEMMESQSADAEPPPPPKPELRYPGLSRGPAGHSEESSLLNKAPPTPTMFKYRPTYSSPGKNHTALTHAYANQSSQQPGYRSEPSLDGREGGGAERSGAERTGGGPGGPPGSGIPGYSLGGRSYPSFSDPTVLAERASRSSSVRSTHNAPPSEATTSTSYKSLANQTPPQAARNGSLSYDSLLTPSESPDFESAAPEMSPGRPRTPVVGYSSPFLSAQIAHQREAELHQPVASSSALMASPQHAVFLRGSGSPPVPPERERERLLHDSQAQHHHHHHHHHHHHRPPRFSRPPLLSDSGPPQPSYPYRTRSTDTTHPPRSPHPPPLGKSLSYSSAAAAEMQYRLVRKASASVAGGGIQAPKDEIQMKSYSRTNGQPKPSSTPSSPTHPISVSTRPGQAHSSAGSSQSPAHKPGGGVKKVTGVGGTTYEISV</sequence>
<dbReference type="EC" id="2.3.1.225" evidence="2"/>
<dbReference type="EMBL" id="AY871210">
    <property type="protein sequence ID" value="AAX68543.1"/>
    <property type="molecule type" value="mRNA"/>
</dbReference>
<dbReference type="EMBL" id="BX511158">
    <property type="status" value="NOT_ANNOTATED_CDS"/>
    <property type="molecule type" value="Genomic_DNA"/>
</dbReference>
<dbReference type="EMBL" id="BX908740">
    <property type="status" value="NOT_ANNOTATED_CDS"/>
    <property type="molecule type" value="Genomic_DNA"/>
</dbReference>
<dbReference type="RefSeq" id="NP_001034729.1">
    <property type="nucleotide sequence ID" value="NM_001039640.1"/>
</dbReference>
<dbReference type="RefSeq" id="XP_005160302.1">
    <property type="nucleotide sequence ID" value="XM_005160245.3"/>
</dbReference>
<dbReference type="RefSeq" id="XP_068076733.1">
    <property type="nucleotide sequence ID" value="XM_068220632.1"/>
</dbReference>
<dbReference type="SMR" id="Q2THW0"/>
<dbReference type="FunCoup" id="Q2THW0">
    <property type="interactions" value="1039"/>
</dbReference>
<dbReference type="PaxDb" id="7955-ENSDARP00000123884"/>
<dbReference type="Ensembl" id="ENSDART00000003497">
    <property type="protein sequence ID" value="ENSDARP00000009029"/>
    <property type="gene ID" value="ENSDARG00000016263"/>
</dbReference>
<dbReference type="Ensembl" id="ENSDART00000147702">
    <property type="protein sequence ID" value="ENSDARP00000123884"/>
    <property type="gene ID" value="ENSDARG00000016263"/>
</dbReference>
<dbReference type="GeneID" id="571795"/>
<dbReference type="KEGG" id="dre:571795"/>
<dbReference type="AGR" id="ZFIN:ZDB-GENE-090312-92"/>
<dbReference type="CTD" id="571795"/>
<dbReference type="ZFIN" id="ZDB-GENE-090312-92">
    <property type="gene designation" value="zdhhc5a"/>
</dbReference>
<dbReference type="eggNOG" id="KOG1311">
    <property type="taxonomic scope" value="Eukaryota"/>
</dbReference>
<dbReference type="HOGENOM" id="CLU_013779_2_0_1"/>
<dbReference type="InParanoid" id="Q2THW0"/>
<dbReference type="OMA" id="SGGRPCT"/>
<dbReference type="OrthoDB" id="4096362at2759"/>
<dbReference type="PhylomeDB" id="Q2THW0"/>
<dbReference type="TreeFam" id="TF354263"/>
<dbReference type="PRO" id="PR:Q2THW0"/>
<dbReference type="Proteomes" id="UP000000437">
    <property type="component" value="Chromosome 1"/>
</dbReference>
<dbReference type="Bgee" id="ENSDARG00000016263">
    <property type="expression patterns" value="Expressed in cleaving embryo and 26 other cell types or tissues"/>
</dbReference>
<dbReference type="ExpressionAtlas" id="Q2THW0">
    <property type="expression patterns" value="baseline"/>
</dbReference>
<dbReference type="GO" id="GO:0005886">
    <property type="term" value="C:plasma membrane"/>
    <property type="evidence" value="ECO:0007669"/>
    <property type="project" value="UniProtKB-SubCell"/>
</dbReference>
<dbReference type="GO" id="GO:0016409">
    <property type="term" value="F:palmitoyltransferase activity"/>
    <property type="evidence" value="ECO:0000318"/>
    <property type="project" value="GO_Central"/>
</dbReference>
<dbReference type="GO" id="GO:0019706">
    <property type="term" value="F:protein-cysteine S-palmitoyltransferase activity"/>
    <property type="evidence" value="ECO:0007669"/>
    <property type="project" value="UniProtKB-EC"/>
</dbReference>
<dbReference type="GO" id="GO:0062208">
    <property type="term" value="P:positive regulation of pattern recognition receptor signaling pathway"/>
    <property type="evidence" value="ECO:0000318"/>
    <property type="project" value="GO_Central"/>
</dbReference>
<dbReference type="InterPro" id="IPR001594">
    <property type="entry name" value="Palmitoyltrfase_DHHC"/>
</dbReference>
<dbReference type="PANTHER" id="PTHR12349">
    <property type="entry name" value="ANKYRIN REPEAT AND LEM DOMAIN-CONTAINING PROTEIN 2"/>
    <property type="match status" value="1"/>
</dbReference>
<dbReference type="PANTHER" id="PTHR12349:SF3">
    <property type="entry name" value="PALMITOYLTRANSFERASE ZDHHC5"/>
    <property type="match status" value="1"/>
</dbReference>
<dbReference type="Pfam" id="PF01529">
    <property type="entry name" value="DHHC"/>
    <property type="match status" value="1"/>
</dbReference>
<dbReference type="PROSITE" id="PS50216">
    <property type="entry name" value="DHHC"/>
    <property type="match status" value="1"/>
</dbReference>
<accession>Q2THW0</accession>
<proteinExistence type="evidence at transcript level"/>
<protein>
    <recommendedName>
        <fullName evidence="7">Palmitoyltransferase ZDHHC5-A</fullName>
        <ecNumber evidence="2">2.3.1.225</ecNumber>
    </recommendedName>
    <alternativeName>
        <fullName evidence="7">Zinc finger DHHC domain-containing protein 5-A</fullName>
        <shortName evidence="7">DHHC-5A</shortName>
    </alternativeName>
</protein>
<comment type="function">
    <text evidence="2">Palmitoyltransferase that catalyzes the addition of palmitate onto various protein substrates and is involved in a variety of cellular processes.</text>
</comment>
<comment type="catalytic activity">
    <reaction evidence="2">
        <text>L-cysteinyl-[protein] + hexadecanoyl-CoA = S-hexadecanoyl-L-cysteinyl-[protein] + CoA</text>
        <dbReference type="Rhea" id="RHEA:36683"/>
        <dbReference type="Rhea" id="RHEA-COMP:10131"/>
        <dbReference type="Rhea" id="RHEA-COMP:11032"/>
        <dbReference type="ChEBI" id="CHEBI:29950"/>
        <dbReference type="ChEBI" id="CHEBI:57287"/>
        <dbReference type="ChEBI" id="CHEBI:57379"/>
        <dbReference type="ChEBI" id="CHEBI:74151"/>
        <dbReference type="EC" id="2.3.1.225"/>
    </reaction>
    <physiologicalReaction direction="left-to-right" evidence="2">
        <dbReference type="Rhea" id="RHEA:36684"/>
    </physiologicalReaction>
</comment>
<comment type="subcellular location">
    <subcellularLocation>
        <location evidence="2">Cell membrane</location>
        <topology evidence="3">Multi-pass membrane protein</topology>
    </subcellularLocation>
</comment>
<comment type="developmental stage">
    <text evidence="6">Probably maternally supplied, the zygotic expression is detected early during development at the 512-cell stage.</text>
</comment>
<comment type="domain">
    <text evidence="1">The DHHC domain is required for palmitoyltransferase activity.</text>
</comment>
<comment type="similarity">
    <text evidence="7">Belongs to the DHHC palmitoyltransferase family. ERF2/ZDHHC9 subfamily.</text>
</comment>
<feature type="chain" id="PRO_0000451033" description="Palmitoyltransferase ZDHHC5-A">
    <location>
        <begin position="1"/>
        <end position="744"/>
    </location>
</feature>
<feature type="topological domain" description="Cytoplasmic" evidence="7">
    <location>
        <begin position="1"/>
        <end position="30"/>
    </location>
</feature>
<feature type="transmembrane region" description="Helical" evidence="3">
    <location>
        <begin position="31"/>
        <end position="51"/>
    </location>
</feature>
<feature type="topological domain" description="Extracellular" evidence="7">
    <location>
        <begin position="52"/>
        <end position="61"/>
    </location>
</feature>
<feature type="transmembrane region" description="Helical" evidence="3">
    <location>
        <begin position="62"/>
        <end position="82"/>
    </location>
</feature>
<feature type="topological domain" description="Cytoplasmic" evidence="7">
    <location>
        <begin position="83"/>
        <end position="167"/>
    </location>
</feature>
<feature type="transmembrane region" description="Helical" evidence="3">
    <location>
        <begin position="168"/>
        <end position="188"/>
    </location>
</feature>
<feature type="topological domain" description="Extracellular" evidence="7">
    <location>
        <begin position="189"/>
        <end position="208"/>
    </location>
</feature>
<feature type="transmembrane region" description="Helical" evidence="3">
    <location>
        <begin position="209"/>
        <end position="229"/>
    </location>
</feature>
<feature type="topological domain" description="Cytoplasmic" evidence="7">
    <location>
        <begin position="230"/>
        <end position="744"/>
    </location>
</feature>
<feature type="domain" description="DHHC" evidence="4">
    <location>
        <begin position="121"/>
        <end position="171"/>
    </location>
</feature>
<feature type="region of interest" description="Disordered" evidence="5">
    <location>
        <begin position="1"/>
        <end position="25"/>
    </location>
</feature>
<feature type="region of interest" description="Disordered" evidence="5">
    <location>
        <begin position="314"/>
        <end position="523"/>
    </location>
</feature>
<feature type="region of interest" description="Disordered" evidence="5">
    <location>
        <begin position="556"/>
        <end position="645"/>
    </location>
</feature>
<feature type="region of interest" description="Disordered" evidence="5">
    <location>
        <begin position="664"/>
        <end position="744"/>
    </location>
</feature>
<feature type="compositionally biased region" description="Gly residues" evidence="5">
    <location>
        <begin position="1"/>
        <end position="11"/>
    </location>
</feature>
<feature type="compositionally biased region" description="Polar residues" evidence="5">
    <location>
        <begin position="369"/>
        <end position="393"/>
    </location>
</feature>
<feature type="compositionally biased region" description="Basic and acidic residues" evidence="5">
    <location>
        <begin position="398"/>
        <end position="413"/>
    </location>
</feature>
<feature type="compositionally biased region" description="Gly residues" evidence="5">
    <location>
        <begin position="415"/>
        <end position="428"/>
    </location>
</feature>
<feature type="compositionally biased region" description="Polar residues" evidence="5">
    <location>
        <begin position="460"/>
        <end position="501"/>
    </location>
</feature>
<feature type="compositionally biased region" description="Basic and acidic residues" evidence="5">
    <location>
        <begin position="571"/>
        <end position="584"/>
    </location>
</feature>
<feature type="compositionally biased region" description="Basic residues" evidence="5">
    <location>
        <begin position="585"/>
        <end position="601"/>
    </location>
</feature>
<feature type="compositionally biased region" description="Low complexity" evidence="5">
    <location>
        <begin position="621"/>
        <end position="630"/>
    </location>
</feature>
<feature type="compositionally biased region" description="Low complexity" evidence="5">
    <location>
        <begin position="689"/>
        <end position="723"/>
    </location>
</feature>
<feature type="compositionally biased region" description="Gly residues" evidence="5">
    <location>
        <begin position="725"/>
        <end position="737"/>
    </location>
</feature>
<feature type="active site" description="S-palmitoyl cysteine intermediate" evidence="2">
    <location>
        <position position="151"/>
    </location>
</feature>
<reference key="1">
    <citation type="submission" date="2004-12" db="EMBL/GenBank/DDBJ databases">
        <title>A superfamily of membrane-associated DHHC type zinc finger proteins.</title>
        <authorList>
            <person name="Chen Y."/>
            <person name="Huang C.-H."/>
        </authorList>
    </citation>
    <scope>NUCLEOTIDE SEQUENCE [MRNA]</scope>
</reference>
<reference key="2">
    <citation type="journal article" date="2013" name="Nature">
        <title>The zebrafish reference genome sequence and its relationship to the human genome.</title>
        <authorList>
            <person name="Howe K."/>
            <person name="Clark M.D."/>
            <person name="Torroja C.F."/>
            <person name="Torrance J."/>
            <person name="Berthelot C."/>
            <person name="Muffato M."/>
            <person name="Collins J.E."/>
            <person name="Humphray S."/>
            <person name="McLaren K."/>
            <person name="Matthews L."/>
            <person name="McLaren S."/>
            <person name="Sealy I."/>
            <person name="Caccamo M."/>
            <person name="Churcher C."/>
            <person name="Scott C."/>
            <person name="Barrett J.C."/>
            <person name="Koch R."/>
            <person name="Rauch G.J."/>
            <person name="White S."/>
            <person name="Chow W."/>
            <person name="Kilian B."/>
            <person name="Quintais L.T."/>
            <person name="Guerra-Assuncao J.A."/>
            <person name="Zhou Y."/>
            <person name="Gu Y."/>
            <person name="Yen J."/>
            <person name="Vogel J.H."/>
            <person name="Eyre T."/>
            <person name="Redmond S."/>
            <person name="Banerjee R."/>
            <person name="Chi J."/>
            <person name="Fu B."/>
            <person name="Langley E."/>
            <person name="Maguire S.F."/>
            <person name="Laird G.K."/>
            <person name="Lloyd D."/>
            <person name="Kenyon E."/>
            <person name="Donaldson S."/>
            <person name="Sehra H."/>
            <person name="Almeida-King J."/>
            <person name="Loveland J."/>
            <person name="Trevanion S."/>
            <person name="Jones M."/>
            <person name="Quail M."/>
            <person name="Willey D."/>
            <person name="Hunt A."/>
            <person name="Burton J."/>
            <person name="Sims S."/>
            <person name="McLay K."/>
            <person name="Plumb B."/>
            <person name="Davis J."/>
            <person name="Clee C."/>
            <person name="Oliver K."/>
            <person name="Clark R."/>
            <person name="Riddle C."/>
            <person name="Elliot D."/>
            <person name="Threadgold G."/>
            <person name="Harden G."/>
            <person name="Ware D."/>
            <person name="Begum S."/>
            <person name="Mortimore B."/>
            <person name="Kerry G."/>
            <person name="Heath P."/>
            <person name="Phillimore B."/>
            <person name="Tracey A."/>
            <person name="Corby N."/>
            <person name="Dunn M."/>
            <person name="Johnson C."/>
            <person name="Wood J."/>
            <person name="Clark S."/>
            <person name="Pelan S."/>
            <person name="Griffiths G."/>
            <person name="Smith M."/>
            <person name="Glithero R."/>
            <person name="Howden P."/>
            <person name="Barker N."/>
            <person name="Lloyd C."/>
            <person name="Stevens C."/>
            <person name="Harley J."/>
            <person name="Holt K."/>
            <person name="Panagiotidis G."/>
            <person name="Lovell J."/>
            <person name="Beasley H."/>
            <person name="Henderson C."/>
            <person name="Gordon D."/>
            <person name="Auger K."/>
            <person name="Wright D."/>
            <person name="Collins J."/>
            <person name="Raisen C."/>
            <person name="Dyer L."/>
            <person name="Leung K."/>
            <person name="Robertson L."/>
            <person name="Ambridge K."/>
            <person name="Leongamornlert D."/>
            <person name="McGuire S."/>
            <person name="Gilderthorp R."/>
            <person name="Griffiths C."/>
            <person name="Manthravadi D."/>
            <person name="Nichol S."/>
            <person name="Barker G."/>
            <person name="Whitehead S."/>
            <person name="Kay M."/>
            <person name="Brown J."/>
            <person name="Murnane C."/>
            <person name="Gray E."/>
            <person name="Humphries M."/>
            <person name="Sycamore N."/>
            <person name="Barker D."/>
            <person name="Saunders D."/>
            <person name="Wallis J."/>
            <person name="Babbage A."/>
            <person name="Hammond S."/>
            <person name="Mashreghi-Mohammadi M."/>
            <person name="Barr L."/>
            <person name="Martin S."/>
            <person name="Wray P."/>
            <person name="Ellington A."/>
            <person name="Matthews N."/>
            <person name="Ellwood M."/>
            <person name="Woodmansey R."/>
            <person name="Clark G."/>
            <person name="Cooper J."/>
            <person name="Tromans A."/>
            <person name="Grafham D."/>
            <person name="Skuce C."/>
            <person name="Pandian R."/>
            <person name="Andrews R."/>
            <person name="Harrison E."/>
            <person name="Kimberley A."/>
            <person name="Garnett J."/>
            <person name="Fosker N."/>
            <person name="Hall R."/>
            <person name="Garner P."/>
            <person name="Kelly D."/>
            <person name="Bird C."/>
            <person name="Palmer S."/>
            <person name="Gehring I."/>
            <person name="Berger A."/>
            <person name="Dooley C.M."/>
            <person name="Ersan-Urun Z."/>
            <person name="Eser C."/>
            <person name="Geiger H."/>
            <person name="Geisler M."/>
            <person name="Karotki L."/>
            <person name="Kirn A."/>
            <person name="Konantz J."/>
            <person name="Konantz M."/>
            <person name="Oberlander M."/>
            <person name="Rudolph-Geiger S."/>
            <person name="Teucke M."/>
            <person name="Lanz C."/>
            <person name="Raddatz G."/>
            <person name="Osoegawa K."/>
            <person name="Zhu B."/>
            <person name="Rapp A."/>
            <person name="Widaa S."/>
            <person name="Langford C."/>
            <person name="Yang F."/>
            <person name="Schuster S.C."/>
            <person name="Carter N.P."/>
            <person name="Harrow J."/>
            <person name="Ning Z."/>
            <person name="Herrero J."/>
            <person name="Searle S.M."/>
            <person name="Enright A."/>
            <person name="Geisler R."/>
            <person name="Plasterk R.H."/>
            <person name="Lee C."/>
            <person name="Westerfield M."/>
            <person name="de Jong P.J."/>
            <person name="Zon L.I."/>
            <person name="Postlethwait J.H."/>
            <person name="Nusslein-Volhard C."/>
            <person name="Hubbard T.J."/>
            <person name="Roest Crollius H."/>
            <person name="Rogers J."/>
            <person name="Stemple D.L."/>
        </authorList>
    </citation>
    <scope>NUCLEOTIDE SEQUENCE [LARGE SCALE GENOMIC DNA]</scope>
    <source>
        <strain>Tuebingen</strain>
    </source>
</reference>
<reference key="3">
    <citation type="journal article" date="2016" name="Biochem. Biophys. Res. Commun.">
        <title>Protein palmitoylation activate zygotic gene expression during the maternal-to-zygotic transition.</title>
        <authorList>
            <person name="Du Z."/>
            <person name="Chen X."/>
            <person name="Li X."/>
            <person name="He K."/>
            <person name="Ji S."/>
            <person name="Shi W."/>
            <person name="Hao A."/>
        </authorList>
    </citation>
    <scope>DEVELOPMENTAL STAGE</scope>
</reference>